<proteinExistence type="inferred from homology"/>
<organism>
    <name type="scientific">Homo sapiens</name>
    <name type="common">Human</name>
    <dbReference type="NCBI Taxonomy" id="9606"/>
    <lineage>
        <taxon>Eukaryota</taxon>
        <taxon>Metazoa</taxon>
        <taxon>Chordata</taxon>
        <taxon>Craniata</taxon>
        <taxon>Vertebrata</taxon>
        <taxon>Euteleostomi</taxon>
        <taxon>Mammalia</taxon>
        <taxon>Eutheria</taxon>
        <taxon>Euarchontoglires</taxon>
        <taxon>Primates</taxon>
        <taxon>Haplorrhini</taxon>
        <taxon>Catarrhini</taxon>
        <taxon>Hominidae</taxon>
        <taxon>Homo</taxon>
    </lineage>
</organism>
<feature type="chain" id="PRO_0000290164" description="PRAME family member 20">
    <location>
        <begin position="1"/>
        <end position="475"/>
    </location>
</feature>
<feature type="repeat" description="LRR 1; degenerate" evidence="1">
    <location>
        <begin position="97"/>
        <end position="124"/>
    </location>
</feature>
<feature type="repeat" description="LRR 2; degenerate" evidence="1">
    <location>
        <begin position="179"/>
        <end position="203"/>
    </location>
</feature>
<feature type="repeat" description="LRR 3; degenerate" evidence="1">
    <location>
        <begin position="204"/>
        <end position="230"/>
    </location>
</feature>
<feature type="repeat" description="LRR 4; degenerate" evidence="1">
    <location>
        <begin position="231"/>
        <end position="265"/>
    </location>
</feature>
<feature type="repeat" description="LRR 5" evidence="1">
    <location>
        <begin position="266"/>
        <end position="291"/>
    </location>
</feature>
<feature type="repeat" description="LRR 6" evidence="1">
    <location>
        <begin position="292"/>
        <end position="323"/>
    </location>
</feature>
<feature type="repeat" description="LRR 7" evidence="1">
    <location>
        <begin position="324"/>
        <end position="342"/>
    </location>
</feature>
<feature type="repeat" description="LRR 8" evidence="1">
    <location>
        <begin position="348"/>
        <end position="375"/>
    </location>
</feature>
<feature type="repeat" description="LRR 9" evidence="1">
    <location>
        <begin position="376"/>
        <end position="400"/>
    </location>
</feature>
<evidence type="ECO:0000250" key="1">
    <source>
        <dbReference type="UniProtKB" id="Q3UWY1"/>
    </source>
</evidence>
<evidence type="ECO:0000305" key="2"/>
<evidence type="ECO:0000312" key="3">
    <source>
        <dbReference type="HGNC" id="HGNC:25224"/>
    </source>
</evidence>
<sequence length="475" mass="54784">MSIRTPPRLLELAGRSLLRDEALAISTLEELPTELFPPLFMEAFSRRHCEALKLMVQAWPFLRLPLGSLMKRPCPETFQAVLDGLDALLTHRVRLRRWKLQVLDLQDVSENFWMVWSEAMARRCLPNAMMNRKPLQDCPRMRGQQPLTVFIDLCLKNRTLDEYFTCLFLWVKQREGLVHLCCKKLKMLGMLFHNIRNILKTVNLDCIQEVEVNCNWTLPVLAEFTPYLGQMRNLRKLVLSDIDSRYISPEQKKEFVTQFTTQFLKLRCLQKLYMNSVSFLEGHLDQMLSCLKTSLNILAITNCVLLESDLKHLSKYPSIGQLKTLDLSGTRLANFSLVPLQVLLEKVAATLEYLDLDDCGIVDSQVNAILPALSRCFELTTFSFRGNPISTATLENLLCHTIRLNNLCLELYPAPRESYDVRGIVCRSRFAQLGAELMGRVRALREPERILFCTDYCPQCGNRSLYDLEVDRCCC</sequence>
<reference key="1">
    <citation type="journal article" date="2006" name="Nature">
        <title>The DNA sequence and biological annotation of human chromosome 1.</title>
        <authorList>
            <person name="Gregory S.G."/>
            <person name="Barlow K.F."/>
            <person name="McLay K.E."/>
            <person name="Kaul R."/>
            <person name="Swarbreck D."/>
            <person name="Dunham A."/>
            <person name="Scott C.E."/>
            <person name="Howe K.L."/>
            <person name="Woodfine K."/>
            <person name="Spencer C.C.A."/>
            <person name="Jones M.C."/>
            <person name="Gillson C."/>
            <person name="Searle S."/>
            <person name="Zhou Y."/>
            <person name="Kokocinski F."/>
            <person name="McDonald L."/>
            <person name="Evans R."/>
            <person name="Phillips K."/>
            <person name="Atkinson A."/>
            <person name="Cooper R."/>
            <person name="Jones C."/>
            <person name="Hall R.E."/>
            <person name="Andrews T.D."/>
            <person name="Lloyd C."/>
            <person name="Ainscough R."/>
            <person name="Almeida J.P."/>
            <person name="Ambrose K.D."/>
            <person name="Anderson F."/>
            <person name="Andrew R.W."/>
            <person name="Ashwell R.I.S."/>
            <person name="Aubin K."/>
            <person name="Babbage A.K."/>
            <person name="Bagguley C.L."/>
            <person name="Bailey J."/>
            <person name="Beasley H."/>
            <person name="Bethel G."/>
            <person name="Bird C.P."/>
            <person name="Bray-Allen S."/>
            <person name="Brown J.Y."/>
            <person name="Brown A.J."/>
            <person name="Buckley D."/>
            <person name="Burton J."/>
            <person name="Bye J."/>
            <person name="Carder C."/>
            <person name="Chapman J.C."/>
            <person name="Clark S.Y."/>
            <person name="Clarke G."/>
            <person name="Clee C."/>
            <person name="Cobley V."/>
            <person name="Collier R.E."/>
            <person name="Corby N."/>
            <person name="Coville G.J."/>
            <person name="Davies J."/>
            <person name="Deadman R."/>
            <person name="Dunn M."/>
            <person name="Earthrowl M."/>
            <person name="Ellington A.G."/>
            <person name="Errington H."/>
            <person name="Frankish A."/>
            <person name="Frankland J."/>
            <person name="French L."/>
            <person name="Garner P."/>
            <person name="Garnett J."/>
            <person name="Gay L."/>
            <person name="Ghori M.R.J."/>
            <person name="Gibson R."/>
            <person name="Gilby L.M."/>
            <person name="Gillett W."/>
            <person name="Glithero R.J."/>
            <person name="Grafham D.V."/>
            <person name="Griffiths C."/>
            <person name="Griffiths-Jones S."/>
            <person name="Grocock R."/>
            <person name="Hammond S."/>
            <person name="Harrison E.S.I."/>
            <person name="Hart E."/>
            <person name="Haugen E."/>
            <person name="Heath P.D."/>
            <person name="Holmes S."/>
            <person name="Holt K."/>
            <person name="Howden P.J."/>
            <person name="Hunt A.R."/>
            <person name="Hunt S.E."/>
            <person name="Hunter G."/>
            <person name="Isherwood J."/>
            <person name="James R."/>
            <person name="Johnson C."/>
            <person name="Johnson D."/>
            <person name="Joy A."/>
            <person name="Kay M."/>
            <person name="Kershaw J.K."/>
            <person name="Kibukawa M."/>
            <person name="Kimberley A.M."/>
            <person name="King A."/>
            <person name="Knights A.J."/>
            <person name="Lad H."/>
            <person name="Laird G."/>
            <person name="Lawlor S."/>
            <person name="Leongamornlert D.A."/>
            <person name="Lloyd D.M."/>
            <person name="Loveland J."/>
            <person name="Lovell J."/>
            <person name="Lush M.J."/>
            <person name="Lyne R."/>
            <person name="Martin S."/>
            <person name="Mashreghi-Mohammadi M."/>
            <person name="Matthews L."/>
            <person name="Matthews N.S.W."/>
            <person name="McLaren S."/>
            <person name="Milne S."/>
            <person name="Mistry S."/>
            <person name="Moore M.J.F."/>
            <person name="Nickerson T."/>
            <person name="O'Dell C.N."/>
            <person name="Oliver K."/>
            <person name="Palmeiri A."/>
            <person name="Palmer S.A."/>
            <person name="Parker A."/>
            <person name="Patel D."/>
            <person name="Pearce A.V."/>
            <person name="Peck A.I."/>
            <person name="Pelan S."/>
            <person name="Phelps K."/>
            <person name="Phillimore B.J."/>
            <person name="Plumb R."/>
            <person name="Rajan J."/>
            <person name="Raymond C."/>
            <person name="Rouse G."/>
            <person name="Saenphimmachak C."/>
            <person name="Sehra H.K."/>
            <person name="Sheridan E."/>
            <person name="Shownkeen R."/>
            <person name="Sims S."/>
            <person name="Skuce C.D."/>
            <person name="Smith M."/>
            <person name="Steward C."/>
            <person name="Subramanian S."/>
            <person name="Sycamore N."/>
            <person name="Tracey A."/>
            <person name="Tromans A."/>
            <person name="Van Helmond Z."/>
            <person name="Wall M."/>
            <person name="Wallis J.M."/>
            <person name="White S."/>
            <person name="Whitehead S.L."/>
            <person name="Wilkinson J.E."/>
            <person name="Willey D.L."/>
            <person name="Williams H."/>
            <person name="Wilming L."/>
            <person name="Wray P.W."/>
            <person name="Wu Z."/>
            <person name="Coulson A."/>
            <person name="Vaudin M."/>
            <person name="Sulston J.E."/>
            <person name="Durbin R.M."/>
            <person name="Hubbard T."/>
            <person name="Wooster R."/>
            <person name="Dunham I."/>
            <person name="Carter N.P."/>
            <person name="McVean G."/>
            <person name="Ross M.T."/>
            <person name="Harrow J."/>
            <person name="Olson M.V."/>
            <person name="Beck S."/>
            <person name="Rogers J."/>
            <person name="Bentley D.R."/>
        </authorList>
    </citation>
    <scope>NUCLEOTIDE SEQUENCE [LARGE SCALE GENOMIC DNA]</scope>
</reference>
<name>PRA20_HUMAN</name>
<accession>Q5VT98</accession>
<keyword id="KW-0433">Leucine-rich repeat</keyword>
<keyword id="KW-1185">Reference proteome</keyword>
<keyword id="KW-0677">Repeat</keyword>
<protein>
    <recommendedName>
        <fullName evidence="3">PRAME family member 20</fullName>
    </recommendedName>
</protein>
<comment type="similarity">
    <text evidence="2">Belongs to the PRAME family.</text>
</comment>
<dbReference type="EMBL" id="AC243961">
    <property type="status" value="NOT_ANNOTATED_CDS"/>
    <property type="molecule type" value="Genomic_DNA"/>
</dbReference>
<dbReference type="CCDS" id="CCDS41265.1"/>
<dbReference type="RefSeq" id="NP_001093322.2">
    <property type="nucleotide sequence ID" value="NM_001099852.2"/>
</dbReference>
<dbReference type="BioGRID" id="570450">
    <property type="interactions" value="2"/>
</dbReference>
<dbReference type="FunCoup" id="Q5VT98">
    <property type="interactions" value="69"/>
</dbReference>
<dbReference type="IntAct" id="Q5VT98">
    <property type="interactions" value="2"/>
</dbReference>
<dbReference type="STRING" id="9606.ENSP00000346275"/>
<dbReference type="iPTMnet" id="Q5VT98"/>
<dbReference type="PhosphoSitePlus" id="Q5VT98"/>
<dbReference type="BioMuta" id="PRAMEF20"/>
<dbReference type="DMDM" id="74756784"/>
<dbReference type="MassIVE" id="Q5VT98"/>
<dbReference type="PaxDb" id="9606-ENSP00000346275"/>
<dbReference type="PeptideAtlas" id="Q5VT98"/>
<dbReference type="ProteomicsDB" id="65316"/>
<dbReference type="Antibodypedia" id="73309">
    <property type="antibodies" value="60 antibodies from 12 providers"/>
</dbReference>
<dbReference type="DNASU" id="645425"/>
<dbReference type="Ensembl" id="ENST00000602960.2">
    <property type="protein sequence ID" value="ENSP00000473584.1"/>
    <property type="gene ID" value="ENSG00000204478.11"/>
</dbReference>
<dbReference type="GeneID" id="645425"/>
<dbReference type="KEGG" id="hsa:645425"/>
<dbReference type="MANE-Select" id="ENST00000602960.2">
    <property type="protein sequence ID" value="ENSP00000473584.1"/>
    <property type="RefSeq nucleotide sequence ID" value="NM_001099852.2"/>
    <property type="RefSeq protein sequence ID" value="NP_001093322.2"/>
</dbReference>
<dbReference type="UCSC" id="uc009vnv.1">
    <property type="organism name" value="human"/>
</dbReference>
<dbReference type="AGR" id="HGNC:25224"/>
<dbReference type="CTD" id="645425"/>
<dbReference type="GeneCards" id="PRAMEF20"/>
<dbReference type="HGNC" id="HGNC:25224">
    <property type="gene designation" value="PRAMEF20"/>
</dbReference>
<dbReference type="HPA" id="ENSG00000204478">
    <property type="expression patterns" value="Not detected"/>
</dbReference>
<dbReference type="neXtProt" id="NX_Q5VT98"/>
<dbReference type="OpenTargets" id="ENSG00000204478"/>
<dbReference type="PharmGKB" id="PA145148198"/>
<dbReference type="VEuPathDB" id="HostDB:ENSG00000204478"/>
<dbReference type="eggNOG" id="ENOG502QWSJ">
    <property type="taxonomic scope" value="Eukaryota"/>
</dbReference>
<dbReference type="GeneTree" id="ENSGT01030000234531"/>
<dbReference type="HOGENOM" id="CLU_039635_2_1_1"/>
<dbReference type="InParanoid" id="Q5VT98"/>
<dbReference type="OMA" id="CTDYCSR"/>
<dbReference type="OrthoDB" id="9533139at2759"/>
<dbReference type="PAN-GO" id="Q5VT98">
    <property type="GO annotations" value="1 GO annotation based on evolutionary models"/>
</dbReference>
<dbReference type="TreeFam" id="TF332708"/>
<dbReference type="PathwayCommons" id="Q5VT98"/>
<dbReference type="SignaLink" id="Q5VT98"/>
<dbReference type="BioGRID-ORCS" id="645425">
    <property type="hits" value="15 hits in 686 CRISPR screens"/>
</dbReference>
<dbReference type="GenomeRNAi" id="645425"/>
<dbReference type="Pharos" id="Q5VT98">
    <property type="development level" value="Tdark"/>
</dbReference>
<dbReference type="PRO" id="PR:Q5VT98"/>
<dbReference type="Proteomes" id="UP000005640">
    <property type="component" value="Chromosome 1"/>
</dbReference>
<dbReference type="RNAct" id="Q5VT98">
    <property type="molecule type" value="protein"/>
</dbReference>
<dbReference type="Bgee" id="ENSG00000204478">
    <property type="expression patterns" value="Expressed in ectocervix"/>
</dbReference>
<dbReference type="GO" id="GO:0031462">
    <property type="term" value="C:Cul2-RING ubiquitin ligase complex"/>
    <property type="evidence" value="ECO:0000318"/>
    <property type="project" value="GO_Central"/>
</dbReference>
<dbReference type="GO" id="GO:0005737">
    <property type="term" value="C:cytoplasm"/>
    <property type="evidence" value="ECO:0000318"/>
    <property type="project" value="GO_Central"/>
</dbReference>
<dbReference type="GO" id="GO:1990756">
    <property type="term" value="F:ubiquitin-like ligase-substrate adaptor activity"/>
    <property type="evidence" value="ECO:0000318"/>
    <property type="project" value="GO_Central"/>
</dbReference>
<dbReference type="GO" id="GO:0043066">
    <property type="term" value="P:negative regulation of apoptotic process"/>
    <property type="evidence" value="ECO:0007669"/>
    <property type="project" value="InterPro"/>
</dbReference>
<dbReference type="GO" id="GO:0045596">
    <property type="term" value="P:negative regulation of cell differentiation"/>
    <property type="evidence" value="ECO:0007669"/>
    <property type="project" value="InterPro"/>
</dbReference>
<dbReference type="GO" id="GO:0045892">
    <property type="term" value="P:negative regulation of DNA-templated transcription"/>
    <property type="evidence" value="ECO:0007669"/>
    <property type="project" value="InterPro"/>
</dbReference>
<dbReference type="GO" id="GO:0008284">
    <property type="term" value="P:positive regulation of cell population proliferation"/>
    <property type="evidence" value="ECO:0007669"/>
    <property type="project" value="InterPro"/>
</dbReference>
<dbReference type="GO" id="GO:0043161">
    <property type="term" value="P:proteasome-mediated ubiquitin-dependent protein catabolic process"/>
    <property type="evidence" value="ECO:0000318"/>
    <property type="project" value="GO_Central"/>
</dbReference>
<dbReference type="FunFam" id="3.80.10.10:FF:000079">
    <property type="entry name" value="PRAME family member 18"/>
    <property type="match status" value="1"/>
</dbReference>
<dbReference type="Gene3D" id="3.80.10.10">
    <property type="entry name" value="Ribonuclease Inhibitor"/>
    <property type="match status" value="1"/>
</dbReference>
<dbReference type="InterPro" id="IPR032675">
    <property type="entry name" value="LRR_dom_sf"/>
</dbReference>
<dbReference type="InterPro" id="IPR026271">
    <property type="entry name" value="PRAME"/>
</dbReference>
<dbReference type="InterPro" id="IPR050694">
    <property type="entry name" value="PRAME_domain"/>
</dbReference>
<dbReference type="PANTHER" id="PTHR14224:SF93">
    <property type="entry name" value="PRAME FAMILY MEMBER 20"/>
    <property type="match status" value="1"/>
</dbReference>
<dbReference type="PANTHER" id="PTHR14224">
    <property type="entry name" value="SIMILAR TO PREFERENTIALLY EXPRESSED ANTIGEN IN MELANOMA-LIKE 3"/>
    <property type="match status" value="1"/>
</dbReference>
<dbReference type="PIRSF" id="PIRSF038286">
    <property type="entry name" value="PRAME"/>
    <property type="match status" value="1"/>
</dbReference>
<dbReference type="SUPFAM" id="SSF52047">
    <property type="entry name" value="RNI-like"/>
    <property type="match status" value="1"/>
</dbReference>
<gene>
    <name evidence="3" type="primary">PRAMEF20</name>
    <name evidence="3" type="synonym">PRAMEF21</name>
</gene>